<protein>
    <recommendedName>
        <fullName evidence="1">Endoribonuclease YbeY</fullName>
        <ecNumber evidence="1">3.1.-.-</ecNumber>
    </recommendedName>
</protein>
<dbReference type="EC" id="3.1.-.-" evidence="1"/>
<dbReference type="EMBL" id="AE014299">
    <property type="protein sequence ID" value="AAN54249.1"/>
    <property type="molecule type" value="Genomic_DNA"/>
</dbReference>
<dbReference type="RefSeq" id="NP_716804.1">
    <property type="nucleotide sequence ID" value="NC_004347.2"/>
</dbReference>
<dbReference type="RefSeq" id="WP_011071410.1">
    <property type="nucleotide sequence ID" value="NC_004347.2"/>
</dbReference>
<dbReference type="SMR" id="Q8EHN9"/>
<dbReference type="STRING" id="211586.SO_1179"/>
<dbReference type="PaxDb" id="211586-SO_1179"/>
<dbReference type="KEGG" id="son:SO_1179"/>
<dbReference type="PATRIC" id="fig|1028802.3.peg.1824"/>
<dbReference type="eggNOG" id="COG0319">
    <property type="taxonomic scope" value="Bacteria"/>
</dbReference>
<dbReference type="HOGENOM" id="CLU_106710_0_1_6"/>
<dbReference type="OrthoDB" id="9807740at2"/>
<dbReference type="PhylomeDB" id="Q8EHN9"/>
<dbReference type="BioCyc" id="SONE211586:G1GMP-1083-MONOMER"/>
<dbReference type="Proteomes" id="UP000008186">
    <property type="component" value="Chromosome"/>
</dbReference>
<dbReference type="GO" id="GO:0005737">
    <property type="term" value="C:cytoplasm"/>
    <property type="evidence" value="ECO:0007669"/>
    <property type="project" value="UniProtKB-SubCell"/>
</dbReference>
<dbReference type="GO" id="GO:0004222">
    <property type="term" value="F:metalloendopeptidase activity"/>
    <property type="evidence" value="ECO:0007669"/>
    <property type="project" value="InterPro"/>
</dbReference>
<dbReference type="GO" id="GO:0004521">
    <property type="term" value="F:RNA endonuclease activity"/>
    <property type="evidence" value="ECO:0007669"/>
    <property type="project" value="UniProtKB-UniRule"/>
</dbReference>
<dbReference type="GO" id="GO:0008270">
    <property type="term" value="F:zinc ion binding"/>
    <property type="evidence" value="ECO:0007669"/>
    <property type="project" value="UniProtKB-UniRule"/>
</dbReference>
<dbReference type="GO" id="GO:0006364">
    <property type="term" value="P:rRNA processing"/>
    <property type="evidence" value="ECO:0007669"/>
    <property type="project" value="UniProtKB-UniRule"/>
</dbReference>
<dbReference type="Gene3D" id="3.40.390.30">
    <property type="entry name" value="Metalloproteases ('zincins'), catalytic domain"/>
    <property type="match status" value="1"/>
</dbReference>
<dbReference type="HAMAP" id="MF_00009">
    <property type="entry name" value="Endoribonucl_YbeY"/>
    <property type="match status" value="1"/>
</dbReference>
<dbReference type="InterPro" id="IPR023091">
    <property type="entry name" value="MetalPrtase_cat_dom_sf_prd"/>
</dbReference>
<dbReference type="InterPro" id="IPR002036">
    <property type="entry name" value="YbeY"/>
</dbReference>
<dbReference type="InterPro" id="IPR020549">
    <property type="entry name" value="YbeY_CS"/>
</dbReference>
<dbReference type="NCBIfam" id="TIGR00043">
    <property type="entry name" value="rRNA maturation RNase YbeY"/>
    <property type="match status" value="1"/>
</dbReference>
<dbReference type="PANTHER" id="PTHR46986">
    <property type="entry name" value="ENDORIBONUCLEASE YBEY, CHLOROPLASTIC"/>
    <property type="match status" value="1"/>
</dbReference>
<dbReference type="PANTHER" id="PTHR46986:SF1">
    <property type="entry name" value="ENDORIBONUCLEASE YBEY, CHLOROPLASTIC"/>
    <property type="match status" value="1"/>
</dbReference>
<dbReference type="Pfam" id="PF02130">
    <property type="entry name" value="YbeY"/>
    <property type="match status" value="1"/>
</dbReference>
<dbReference type="SUPFAM" id="SSF55486">
    <property type="entry name" value="Metalloproteases ('zincins'), catalytic domain"/>
    <property type="match status" value="1"/>
</dbReference>
<dbReference type="PROSITE" id="PS01306">
    <property type="entry name" value="UPF0054"/>
    <property type="match status" value="1"/>
</dbReference>
<name>YBEY_SHEON</name>
<organism>
    <name type="scientific">Shewanella oneidensis (strain ATCC 700550 / JCM 31522 / CIP 106686 / LMG 19005 / NCIMB 14063 / MR-1)</name>
    <dbReference type="NCBI Taxonomy" id="211586"/>
    <lineage>
        <taxon>Bacteria</taxon>
        <taxon>Pseudomonadati</taxon>
        <taxon>Pseudomonadota</taxon>
        <taxon>Gammaproteobacteria</taxon>
        <taxon>Alteromonadales</taxon>
        <taxon>Shewanellaceae</taxon>
        <taxon>Shewanella</taxon>
    </lineage>
</organism>
<feature type="chain" id="PRO_0000102524" description="Endoribonuclease YbeY">
    <location>
        <begin position="1"/>
        <end position="153"/>
    </location>
</feature>
<feature type="binding site" evidence="1">
    <location>
        <position position="114"/>
    </location>
    <ligand>
        <name>Zn(2+)</name>
        <dbReference type="ChEBI" id="CHEBI:29105"/>
        <note>catalytic</note>
    </ligand>
</feature>
<feature type="binding site" evidence="1">
    <location>
        <position position="118"/>
    </location>
    <ligand>
        <name>Zn(2+)</name>
        <dbReference type="ChEBI" id="CHEBI:29105"/>
        <note>catalytic</note>
    </ligand>
</feature>
<feature type="binding site" evidence="1">
    <location>
        <position position="124"/>
    </location>
    <ligand>
        <name>Zn(2+)</name>
        <dbReference type="ChEBI" id="CHEBI:29105"/>
        <note>catalytic</note>
    </ligand>
</feature>
<gene>
    <name evidence="1" type="primary">ybeY</name>
    <name type="ordered locus">SO_1179</name>
</gene>
<comment type="function">
    <text evidence="1">Single strand-specific metallo-endoribonuclease involved in late-stage 70S ribosome quality control and in maturation of the 3' terminus of the 16S rRNA.</text>
</comment>
<comment type="cofactor">
    <cofactor evidence="1">
        <name>Zn(2+)</name>
        <dbReference type="ChEBI" id="CHEBI:29105"/>
    </cofactor>
    <text evidence="1">Binds 1 zinc ion.</text>
</comment>
<comment type="subcellular location">
    <subcellularLocation>
        <location evidence="1">Cytoplasm</location>
    </subcellularLocation>
</comment>
<comment type="similarity">
    <text evidence="1">Belongs to the endoribonuclease YbeY family.</text>
</comment>
<evidence type="ECO:0000255" key="1">
    <source>
        <dbReference type="HAMAP-Rule" id="MF_00009"/>
    </source>
</evidence>
<accession>Q8EHN9</accession>
<keyword id="KW-0963">Cytoplasm</keyword>
<keyword id="KW-0255">Endonuclease</keyword>
<keyword id="KW-0378">Hydrolase</keyword>
<keyword id="KW-0479">Metal-binding</keyword>
<keyword id="KW-0540">Nuclease</keyword>
<keyword id="KW-1185">Reference proteome</keyword>
<keyword id="KW-0690">Ribosome biogenesis</keyword>
<keyword id="KW-0698">rRNA processing</keyword>
<keyword id="KW-0862">Zinc</keyword>
<sequence>MSLDLALDVQYATTSDYLPSEEQLALWVKTAIGNSMKQAELTIRIVDARESQMLNGTYRGKDKPTNVLSFPFEAPPEIELPLLGDLVICASVVENEAREQDKTLEAHWAHMVVHGCLHLLGYDHIEDEEAEEMESLETQLIESLGFTDPYKEQ</sequence>
<proteinExistence type="inferred from homology"/>
<reference key="1">
    <citation type="journal article" date="2002" name="Nat. Biotechnol.">
        <title>Genome sequence of the dissimilatory metal ion-reducing bacterium Shewanella oneidensis.</title>
        <authorList>
            <person name="Heidelberg J.F."/>
            <person name="Paulsen I.T."/>
            <person name="Nelson K.E."/>
            <person name="Gaidos E.J."/>
            <person name="Nelson W.C."/>
            <person name="Read T.D."/>
            <person name="Eisen J.A."/>
            <person name="Seshadri R."/>
            <person name="Ward N.L."/>
            <person name="Methe B.A."/>
            <person name="Clayton R.A."/>
            <person name="Meyer T."/>
            <person name="Tsapin A."/>
            <person name="Scott J."/>
            <person name="Beanan M.J."/>
            <person name="Brinkac L.M."/>
            <person name="Daugherty S.C."/>
            <person name="DeBoy R.T."/>
            <person name="Dodson R.J."/>
            <person name="Durkin A.S."/>
            <person name="Haft D.H."/>
            <person name="Kolonay J.F."/>
            <person name="Madupu R."/>
            <person name="Peterson J.D."/>
            <person name="Umayam L.A."/>
            <person name="White O."/>
            <person name="Wolf A.M."/>
            <person name="Vamathevan J.J."/>
            <person name="Weidman J.F."/>
            <person name="Impraim M."/>
            <person name="Lee K."/>
            <person name="Berry K.J."/>
            <person name="Lee C."/>
            <person name="Mueller J."/>
            <person name="Khouri H.M."/>
            <person name="Gill J."/>
            <person name="Utterback T.R."/>
            <person name="McDonald L.A."/>
            <person name="Feldblyum T.V."/>
            <person name="Smith H.O."/>
            <person name="Venter J.C."/>
            <person name="Nealson K.H."/>
            <person name="Fraser C.M."/>
        </authorList>
    </citation>
    <scope>NUCLEOTIDE SEQUENCE [LARGE SCALE GENOMIC DNA]</scope>
    <source>
        <strain>ATCC 700550 / JCM 31522 / CIP 106686 / LMG 19005 / NCIMB 14063 / MR-1</strain>
    </source>
</reference>